<proteinExistence type="inferred from homology"/>
<feature type="chain" id="PRO_1000146860" description="Protein DsrB">
    <location>
        <begin position="1"/>
        <end position="62"/>
    </location>
</feature>
<organism>
    <name type="scientific">Shigella boydii serotype 18 (strain CDC 3083-94 / BS512)</name>
    <dbReference type="NCBI Taxonomy" id="344609"/>
    <lineage>
        <taxon>Bacteria</taxon>
        <taxon>Pseudomonadati</taxon>
        <taxon>Pseudomonadota</taxon>
        <taxon>Gammaproteobacteria</taxon>
        <taxon>Enterobacterales</taxon>
        <taxon>Enterobacteriaceae</taxon>
        <taxon>Shigella</taxon>
    </lineage>
</organism>
<reference key="1">
    <citation type="submission" date="2008-05" db="EMBL/GenBank/DDBJ databases">
        <title>Complete sequence of Shigella boydii serotype 18 strain BS512.</title>
        <authorList>
            <person name="Rasko D.A."/>
            <person name="Rosovitz M."/>
            <person name="Maurelli A.T."/>
            <person name="Myers G."/>
            <person name="Seshadri R."/>
            <person name="Cer R."/>
            <person name="Jiang L."/>
            <person name="Ravel J."/>
            <person name="Sebastian Y."/>
        </authorList>
    </citation>
    <scope>NUCLEOTIDE SEQUENCE [LARGE SCALE GENOMIC DNA]</scope>
    <source>
        <strain>CDC 3083-94 / BS512</strain>
    </source>
</reference>
<protein>
    <recommendedName>
        <fullName evidence="1">Protein DsrB</fullName>
    </recommendedName>
</protein>
<dbReference type="EMBL" id="CP001063">
    <property type="protein sequence ID" value="ACD08795.1"/>
    <property type="molecule type" value="Genomic_DNA"/>
</dbReference>
<dbReference type="RefSeq" id="WP_000867217.1">
    <property type="nucleotide sequence ID" value="NC_010658.1"/>
</dbReference>
<dbReference type="SMR" id="B2TXI8"/>
<dbReference type="GeneID" id="93775233"/>
<dbReference type="KEGG" id="sbc:SbBS512_E1075"/>
<dbReference type="HOGENOM" id="CLU_189289_0_0_6"/>
<dbReference type="Proteomes" id="UP000001030">
    <property type="component" value="Chromosome"/>
</dbReference>
<dbReference type="HAMAP" id="MF_01549">
    <property type="entry name" value="DsrB"/>
    <property type="match status" value="1"/>
</dbReference>
<dbReference type="InterPro" id="IPR019717">
    <property type="entry name" value="Dextransucrase_DSRB"/>
</dbReference>
<dbReference type="NCBIfam" id="NF007981">
    <property type="entry name" value="PRK10708.1"/>
    <property type="match status" value="1"/>
</dbReference>
<dbReference type="Pfam" id="PF10781">
    <property type="entry name" value="DSRB"/>
    <property type="match status" value="1"/>
</dbReference>
<keyword id="KW-1185">Reference proteome</keyword>
<accession>B2TXI8</accession>
<name>DSRB_SHIB3</name>
<comment type="similarity">
    <text evidence="1">Belongs to the DsrB family.</text>
</comment>
<sequence length="62" mass="6946">MKVNDRVTVKTDGGPRRPGVVLAVEEFSEGTMYLVSLEDYPLGIWFFNEAGHQDGIFVEKAE</sequence>
<gene>
    <name evidence="1" type="primary">dsrB</name>
    <name type="ordered locus">SbBS512_E1075</name>
</gene>
<evidence type="ECO:0000255" key="1">
    <source>
        <dbReference type="HAMAP-Rule" id="MF_01549"/>
    </source>
</evidence>